<protein>
    <recommendedName>
        <fullName evidence="1">Large ribosomal subunit protein bL9</fullName>
    </recommendedName>
    <alternativeName>
        <fullName evidence="2">50S ribosomal protein L9</fullName>
    </alternativeName>
</protein>
<reference key="1">
    <citation type="journal article" date="2011" name="MBio">
        <title>Novel metabolic attributes of the genus Cyanothece, comprising a group of unicellular nitrogen-fixing Cyanobacteria.</title>
        <authorList>
            <person name="Bandyopadhyay A."/>
            <person name="Elvitigala T."/>
            <person name="Welsh E."/>
            <person name="Stockel J."/>
            <person name="Liberton M."/>
            <person name="Min H."/>
            <person name="Sherman L.A."/>
            <person name="Pakrasi H.B."/>
        </authorList>
    </citation>
    <scope>NUCLEOTIDE SEQUENCE [LARGE SCALE GENOMIC DNA]</scope>
    <source>
        <strain>PCC 7424</strain>
    </source>
</reference>
<evidence type="ECO:0000255" key="1">
    <source>
        <dbReference type="HAMAP-Rule" id="MF_00503"/>
    </source>
</evidence>
<evidence type="ECO:0000305" key="2"/>
<organism>
    <name type="scientific">Gloeothece citriformis (strain PCC 7424)</name>
    <name type="common">Cyanothece sp. (strain PCC 7424)</name>
    <dbReference type="NCBI Taxonomy" id="65393"/>
    <lineage>
        <taxon>Bacteria</taxon>
        <taxon>Bacillati</taxon>
        <taxon>Cyanobacteriota</taxon>
        <taxon>Cyanophyceae</taxon>
        <taxon>Oscillatoriophycideae</taxon>
        <taxon>Chroococcales</taxon>
        <taxon>Aphanothecaceae</taxon>
        <taxon>Gloeothece</taxon>
        <taxon>Gloeothece citriformis</taxon>
    </lineage>
</organism>
<accession>B7KAD1</accession>
<sequence>MAKRVQVVLTKNVNKLGKSGDLVEVAPGYARNYLLPQGIANIATPGILRQVEQRREKERQRLLAERQEAEARKTALQTIGRFVIRKQVGEGEAIFGTVTTQEVADVIKENTSQEIDRRGITLPEISKTGFYKAQVKLHPEVTAEIEIQVAPL</sequence>
<feature type="chain" id="PRO_1000126897" description="Large ribosomal subunit protein bL9">
    <location>
        <begin position="1"/>
        <end position="152"/>
    </location>
</feature>
<keyword id="KW-1185">Reference proteome</keyword>
<keyword id="KW-0687">Ribonucleoprotein</keyword>
<keyword id="KW-0689">Ribosomal protein</keyword>
<keyword id="KW-0694">RNA-binding</keyword>
<keyword id="KW-0699">rRNA-binding</keyword>
<name>RL9_GLOC7</name>
<proteinExistence type="inferred from homology"/>
<dbReference type="EMBL" id="CP001291">
    <property type="protein sequence ID" value="ACK72905.1"/>
    <property type="molecule type" value="Genomic_DNA"/>
</dbReference>
<dbReference type="RefSeq" id="WP_015956488.1">
    <property type="nucleotide sequence ID" value="NC_011729.1"/>
</dbReference>
<dbReference type="SMR" id="B7KAD1"/>
<dbReference type="STRING" id="65393.PCC7424_4542"/>
<dbReference type="KEGG" id="cyc:PCC7424_4542"/>
<dbReference type="eggNOG" id="COG0359">
    <property type="taxonomic scope" value="Bacteria"/>
</dbReference>
<dbReference type="HOGENOM" id="CLU_078938_5_1_3"/>
<dbReference type="OrthoDB" id="9788336at2"/>
<dbReference type="Proteomes" id="UP000002384">
    <property type="component" value="Chromosome"/>
</dbReference>
<dbReference type="GO" id="GO:1990904">
    <property type="term" value="C:ribonucleoprotein complex"/>
    <property type="evidence" value="ECO:0007669"/>
    <property type="project" value="UniProtKB-KW"/>
</dbReference>
<dbReference type="GO" id="GO:0005840">
    <property type="term" value="C:ribosome"/>
    <property type="evidence" value="ECO:0007669"/>
    <property type="project" value="UniProtKB-KW"/>
</dbReference>
<dbReference type="GO" id="GO:0019843">
    <property type="term" value="F:rRNA binding"/>
    <property type="evidence" value="ECO:0007669"/>
    <property type="project" value="UniProtKB-UniRule"/>
</dbReference>
<dbReference type="GO" id="GO:0003735">
    <property type="term" value="F:structural constituent of ribosome"/>
    <property type="evidence" value="ECO:0007669"/>
    <property type="project" value="InterPro"/>
</dbReference>
<dbReference type="GO" id="GO:0006412">
    <property type="term" value="P:translation"/>
    <property type="evidence" value="ECO:0007669"/>
    <property type="project" value="UniProtKB-UniRule"/>
</dbReference>
<dbReference type="FunFam" id="3.40.5.10:FF:000003">
    <property type="entry name" value="50S ribosomal protein L9"/>
    <property type="match status" value="1"/>
</dbReference>
<dbReference type="Gene3D" id="3.10.430.100">
    <property type="entry name" value="Ribosomal protein L9, C-terminal domain"/>
    <property type="match status" value="1"/>
</dbReference>
<dbReference type="Gene3D" id="3.40.5.10">
    <property type="entry name" value="Ribosomal protein L9, N-terminal domain"/>
    <property type="match status" value="1"/>
</dbReference>
<dbReference type="HAMAP" id="MF_00503">
    <property type="entry name" value="Ribosomal_bL9"/>
    <property type="match status" value="1"/>
</dbReference>
<dbReference type="InterPro" id="IPR000244">
    <property type="entry name" value="Ribosomal_bL9"/>
</dbReference>
<dbReference type="InterPro" id="IPR009027">
    <property type="entry name" value="Ribosomal_bL9/RNase_H1_N"/>
</dbReference>
<dbReference type="InterPro" id="IPR020594">
    <property type="entry name" value="Ribosomal_bL9_bac/chp"/>
</dbReference>
<dbReference type="InterPro" id="IPR020069">
    <property type="entry name" value="Ribosomal_bL9_C"/>
</dbReference>
<dbReference type="InterPro" id="IPR036791">
    <property type="entry name" value="Ribosomal_bL9_C_sf"/>
</dbReference>
<dbReference type="InterPro" id="IPR020070">
    <property type="entry name" value="Ribosomal_bL9_N"/>
</dbReference>
<dbReference type="InterPro" id="IPR036935">
    <property type="entry name" value="Ribosomal_bL9_N_sf"/>
</dbReference>
<dbReference type="NCBIfam" id="TIGR00158">
    <property type="entry name" value="L9"/>
    <property type="match status" value="1"/>
</dbReference>
<dbReference type="PANTHER" id="PTHR21368">
    <property type="entry name" value="50S RIBOSOMAL PROTEIN L9"/>
    <property type="match status" value="1"/>
</dbReference>
<dbReference type="Pfam" id="PF03948">
    <property type="entry name" value="Ribosomal_L9_C"/>
    <property type="match status" value="1"/>
</dbReference>
<dbReference type="Pfam" id="PF01281">
    <property type="entry name" value="Ribosomal_L9_N"/>
    <property type="match status" value="1"/>
</dbReference>
<dbReference type="SUPFAM" id="SSF55658">
    <property type="entry name" value="L9 N-domain-like"/>
    <property type="match status" value="1"/>
</dbReference>
<dbReference type="SUPFAM" id="SSF55653">
    <property type="entry name" value="Ribosomal protein L9 C-domain"/>
    <property type="match status" value="1"/>
</dbReference>
<dbReference type="PROSITE" id="PS00651">
    <property type="entry name" value="RIBOSOMAL_L9"/>
    <property type="match status" value="1"/>
</dbReference>
<comment type="function">
    <text evidence="1">Binds to the 23S rRNA.</text>
</comment>
<comment type="similarity">
    <text evidence="1">Belongs to the bacterial ribosomal protein bL9 family.</text>
</comment>
<gene>
    <name evidence="1" type="primary">rplI</name>
    <name evidence="1" type="synonym">rpl9</name>
    <name type="ordered locus">PCC7424_4542</name>
</gene>